<name>TIM9_EREGS</name>
<keyword id="KW-0143">Chaperone</keyword>
<keyword id="KW-1015">Disulfide bond</keyword>
<keyword id="KW-0472">Membrane</keyword>
<keyword id="KW-0479">Metal-binding</keyword>
<keyword id="KW-0496">Mitochondrion</keyword>
<keyword id="KW-0999">Mitochondrion inner membrane</keyword>
<keyword id="KW-0653">Protein transport</keyword>
<keyword id="KW-1185">Reference proteome</keyword>
<keyword id="KW-0811">Translocation</keyword>
<keyword id="KW-0813">Transport</keyword>
<keyword id="KW-0862">Zinc</keyword>
<evidence type="ECO:0000250" key="1"/>
<evidence type="ECO:0000305" key="2"/>
<sequence length="87" mass="10336">MDALNSREQQEFQRVVEQKQMKDFMRLYSNLVERCFSDCVNDFTSSKLTSKEQTCIMRCSEKFLKHSERVGQRFQEQNAALNQSMGR</sequence>
<reference key="1">
    <citation type="journal article" date="2004" name="Science">
        <title>The Ashbya gossypii genome as a tool for mapping the ancient Saccharomyces cerevisiae genome.</title>
        <authorList>
            <person name="Dietrich F.S."/>
            <person name="Voegeli S."/>
            <person name="Brachat S."/>
            <person name="Lerch A."/>
            <person name="Gates K."/>
            <person name="Steiner S."/>
            <person name="Mohr C."/>
            <person name="Poehlmann R."/>
            <person name="Luedi P."/>
            <person name="Choi S."/>
            <person name="Wing R.A."/>
            <person name="Flavier A."/>
            <person name="Gaffney T.D."/>
            <person name="Philippsen P."/>
        </authorList>
    </citation>
    <scope>NUCLEOTIDE SEQUENCE [LARGE SCALE GENOMIC DNA]</scope>
    <source>
        <strain>ATCC 10895 / CBS 109.51 / FGSC 9923 / NRRL Y-1056</strain>
    </source>
</reference>
<reference key="2">
    <citation type="journal article" date="2013" name="G3 (Bethesda)">
        <title>Genomes of Ashbya fungi isolated from insects reveal four mating-type loci, numerous translocations, lack of transposons, and distinct gene duplications.</title>
        <authorList>
            <person name="Dietrich F.S."/>
            <person name="Voegeli S."/>
            <person name="Kuo S."/>
            <person name="Philippsen P."/>
        </authorList>
    </citation>
    <scope>GENOME REANNOTATION</scope>
    <source>
        <strain>ATCC 10895 / CBS 109.51 / FGSC 9923 / NRRL Y-1056</strain>
    </source>
</reference>
<dbReference type="EMBL" id="AE016818">
    <property type="protein sequence ID" value="AAS52627.1"/>
    <property type="molecule type" value="Genomic_DNA"/>
</dbReference>
<dbReference type="RefSeq" id="NP_984803.1">
    <property type="nucleotide sequence ID" value="NM_210157.1"/>
</dbReference>
<dbReference type="SMR" id="Q757S0"/>
<dbReference type="FunCoup" id="Q757S0">
    <property type="interactions" value="939"/>
</dbReference>
<dbReference type="STRING" id="284811.Q757S0"/>
<dbReference type="EnsemblFungi" id="AAS52627">
    <property type="protein sequence ID" value="AAS52627"/>
    <property type="gene ID" value="AGOS_AEL058W"/>
</dbReference>
<dbReference type="GeneID" id="4620995"/>
<dbReference type="KEGG" id="ago:AGOS_AEL058W"/>
<dbReference type="eggNOG" id="KOG3479">
    <property type="taxonomic scope" value="Eukaryota"/>
</dbReference>
<dbReference type="HOGENOM" id="CLU_141397_3_0_1"/>
<dbReference type="InParanoid" id="Q757S0"/>
<dbReference type="OMA" id="QDFLRMY"/>
<dbReference type="OrthoDB" id="1551503at2759"/>
<dbReference type="Proteomes" id="UP000000591">
    <property type="component" value="Chromosome V"/>
</dbReference>
<dbReference type="GO" id="GO:0042719">
    <property type="term" value="C:mitochondrial intermembrane space protein transporter complex"/>
    <property type="evidence" value="ECO:0007669"/>
    <property type="project" value="EnsemblFungi"/>
</dbReference>
<dbReference type="GO" id="GO:0042721">
    <property type="term" value="C:TIM22 mitochondrial import inner membrane insertion complex"/>
    <property type="evidence" value="ECO:0007669"/>
    <property type="project" value="EnsemblFungi"/>
</dbReference>
<dbReference type="GO" id="GO:0046872">
    <property type="term" value="F:metal ion binding"/>
    <property type="evidence" value="ECO:0007669"/>
    <property type="project" value="UniProtKB-KW"/>
</dbReference>
<dbReference type="GO" id="GO:0140318">
    <property type="term" value="F:protein transporter activity"/>
    <property type="evidence" value="ECO:0007669"/>
    <property type="project" value="EnsemblFungi"/>
</dbReference>
<dbReference type="GO" id="GO:0051082">
    <property type="term" value="F:unfolded protein binding"/>
    <property type="evidence" value="ECO:0007669"/>
    <property type="project" value="EnsemblFungi"/>
</dbReference>
<dbReference type="GO" id="GO:0045039">
    <property type="term" value="P:protein insertion into mitochondrial inner membrane"/>
    <property type="evidence" value="ECO:0007669"/>
    <property type="project" value="EnsemblFungi"/>
</dbReference>
<dbReference type="FunFam" id="1.10.287.810:FF:000008">
    <property type="entry name" value="Mitochondrial import inner membrane translocase subunit TIM9"/>
    <property type="match status" value="1"/>
</dbReference>
<dbReference type="Gene3D" id="1.10.287.810">
    <property type="entry name" value="Mitochondrial import inner membrane translocase subunit tim13 like domains"/>
    <property type="match status" value="1"/>
</dbReference>
<dbReference type="InterPro" id="IPR050673">
    <property type="entry name" value="Mito_inner_translocase_sub"/>
</dbReference>
<dbReference type="InterPro" id="IPR004217">
    <property type="entry name" value="Tim10-like"/>
</dbReference>
<dbReference type="InterPro" id="IPR035427">
    <property type="entry name" value="Tim10-like_dom_sf"/>
</dbReference>
<dbReference type="PANTHER" id="PTHR13172">
    <property type="entry name" value="MITOCHONDRIAL IMPORT INNER MEMBRANE TRANSLOCASE SUBUNIT TIM9B"/>
    <property type="match status" value="1"/>
</dbReference>
<dbReference type="Pfam" id="PF02953">
    <property type="entry name" value="zf-Tim10_DDP"/>
    <property type="match status" value="1"/>
</dbReference>
<dbReference type="SUPFAM" id="SSF144122">
    <property type="entry name" value="Tim10-like"/>
    <property type="match status" value="1"/>
</dbReference>
<comment type="function">
    <text evidence="1">Mitochondrial intermembrane chaperone that participates in the import and insertion of multi-pass transmembrane proteins into the mitochondrial inner membrane. Also required for the transfer of beta-barrel precursors from the TOM complex to the sorting and assembly machinery (SAM complex) of the outer membrane. Acts as a chaperone-like protein that protects the hydrophobic precursors from aggregation and guide them through the mitochondrial intermembrane space (By similarity).</text>
</comment>
<comment type="subunit">
    <text evidence="1">Heterohexamer; composed of 3 copies of TIM9 and 3 copies of TIM10, named soluble 70 kDa complex. Associates with the TIM22 complex, whose core is composed of TIM22 and TIM54. Interacts with the transmembrane regions of multi-pass transmembrane proteins in transit (By similarity).</text>
</comment>
<comment type="subcellular location">
    <subcellularLocation>
        <location evidence="1">Mitochondrion inner membrane</location>
        <topology evidence="1">Peripheral membrane protein</topology>
        <orientation evidence="1">Intermembrane side</orientation>
    </subcellularLocation>
</comment>
<comment type="domain">
    <text evidence="1">The twin CX3C motif contains 4 conserved Cys residues that form 2 disulfide bonds in the mitochondrial intermembrane space. However, during the transit of TIM9 from cytoplasm into mitochondrion, the Cys residues probably coordinate zinc, thereby preventing folding and allowing its transfer across mitochondrial outer membrane (By similarity).</text>
</comment>
<comment type="similarity">
    <text evidence="2">Belongs to the small Tim family.</text>
</comment>
<feature type="chain" id="PRO_0000228039" description="Mitochondrial import inner membrane translocase subunit TIM9">
    <location>
        <begin position="1"/>
        <end position="87"/>
    </location>
</feature>
<feature type="short sequence motif" description="Twin CX3C motif">
    <location>
        <begin position="35"/>
        <end position="59"/>
    </location>
</feature>
<feature type="disulfide bond" evidence="1">
    <location>
        <begin position="35"/>
        <end position="59"/>
    </location>
</feature>
<feature type="disulfide bond" evidence="1">
    <location>
        <begin position="39"/>
        <end position="55"/>
    </location>
</feature>
<gene>
    <name type="primary">TIM9</name>
    <name type="ordered locus">AEL058W</name>
</gene>
<proteinExistence type="inferred from homology"/>
<accession>Q757S0</accession>
<organism>
    <name type="scientific">Eremothecium gossypii (strain ATCC 10895 / CBS 109.51 / FGSC 9923 / NRRL Y-1056)</name>
    <name type="common">Yeast</name>
    <name type="synonym">Ashbya gossypii</name>
    <dbReference type="NCBI Taxonomy" id="284811"/>
    <lineage>
        <taxon>Eukaryota</taxon>
        <taxon>Fungi</taxon>
        <taxon>Dikarya</taxon>
        <taxon>Ascomycota</taxon>
        <taxon>Saccharomycotina</taxon>
        <taxon>Saccharomycetes</taxon>
        <taxon>Saccharomycetales</taxon>
        <taxon>Saccharomycetaceae</taxon>
        <taxon>Eremothecium</taxon>
    </lineage>
</organism>
<protein>
    <recommendedName>
        <fullName>Mitochondrial import inner membrane translocase subunit TIM9</fullName>
    </recommendedName>
</protein>